<keyword id="KW-0007">Acetylation</keyword>
<keyword id="KW-0037">Angiogenesis</keyword>
<keyword id="KW-0963">Cytoplasm</keyword>
<keyword id="KW-0217">Developmental protein</keyword>
<keyword id="KW-0221">Differentiation</keyword>
<keyword id="KW-0903">Direct protein sequencing</keyword>
<keyword id="KW-0339">Growth factor</keyword>
<keyword id="KW-0358">Heparin-binding</keyword>
<keyword id="KW-0497">Mitogen</keyword>
<keyword id="KW-0539">Nucleus</keyword>
<keyword id="KW-0597">Phosphoprotein</keyword>
<keyword id="KW-1185">Reference proteome</keyword>
<keyword id="KW-0964">Secreted</keyword>
<reference key="1">
    <citation type="journal article" date="1991" name="Biochem. Biophys. Res. Commun.">
        <title>Amplification and sequencing of mRNA encoding acidic fibroblast growth factor (aFGF) from porcine heart.</title>
        <authorList>
            <person name="Schmidt M."/>
            <person name="Sharma H.S."/>
            <person name="Schott R.J."/>
            <person name="Schaper W."/>
        </authorList>
    </citation>
    <scope>NUCLEOTIDE SEQUENCE [MRNA]</scope>
    <source>
        <tissue>Heart</tissue>
    </source>
</reference>
<reference key="2">
    <citation type="journal article" date="1989" name="Eur. J. Biochem.">
        <title>Isolation of heparin-binding growth factors from bovine, porcine and canine hearts.</title>
        <authorList>
            <person name="Quinkler W."/>
            <person name="Maasberg M."/>
            <person name="Bernotat-Danielowski S."/>
            <person name="Luethe N."/>
            <person name="Sharma H.S."/>
            <person name="Schaper W."/>
        </authorList>
    </citation>
    <scope>PROTEIN SEQUENCE OF 22-41</scope>
</reference>
<evidence type="ECO:0000250" key="1"/>
<evidence type="ECO:0000250" key="2">
    <source>
        <dbReference type="UniProtKB" id="P03968"/>
    </source>
</evidence>
<evidence type="ECO:0000250" key="3">
    <source>
        <dbReference type="UniProtKB" id="P05230"/>
    </source>
</evidence>
<evidence type="ECO:0000305" key="4"/>
<sequence length="152" mass="17103">MAEGEITTFTALTEKFNLPPGNYKKPKLLYCSNGGHFLRILPDGTVDGTRDRSDQHIQLQLSAESVGEVYIKSTETGQYLAMDTSGLLYGSQTPSEECLFLERLEENHYNTYTSKKHAEKNWFVGLKKNGSCKRGPRTHYGQKAILFLPLPV</sequence>
<feature type="initiator methionine" description="Removed" evidence="2">
    <location>
        <position position="1"/>
    </location>
</feature>
<feature type="propeptide" id="PRO_0000008913">
    <location>
        <begin position="2"/>
        <end position="15"/>
    </location>
</feature>
<feature type="chain" id="PRO_0000008914" description="Fibroblast growth factor 1">
    <location>
        <begin position="16"/>
        <end position="152" status="greater than"/>
    </location>
</feature>
<feature type="region of interest" description="Heparin-binding" evidence="1">
    <location>
        <begin position="127"/>
        <end position="143"/>
    </location>
</feature>
<feature type="binding site" evidence="1">
    <location>
        <position position="33"/>
    </location>
    <ligand>
        <name>heparin</name>
        <dbReference type="ChEBI" id="CHEBI:28304"/>
    </ligand>
</feature>
<feature type="modified residue" description="N-acetylalanine" evidence="2">
    <location>
        <position position="2"/>
    </location>
</feature>
<feature type="sequence conflict" description="In Ref. 2; AA sequence." evidence="4" ref="2">
    <original>C</original>
    <variation>S</variation>
    <location>
        <position position="31"/>
    </location>
</feature>
<feature type="sequence conflict" description="In Ref. 2; AA sequence." evidence="4" ref="2">
    <original>R</original>
    <variation>Y</variation>
    <location>
        <position position="39"/>
    </location>
</feature>
<feature type="non-terminal residue">
    <location>
        <position position="152"/>
    </location>
</feature>
<accession>P20002</accession>
<gene>
    <name type="primary">FGF1</name>
</gene>
<comment type="function">
    <text evidence="3">Plays an important role in the regulation of cell survival, cell division, angiogenesis, cell differentiation and cell migration. Functions as a potent mitogen in vitro. Acts as a ligand for FGFR1 and integrins. Binds to FGFR1 in the presence of heparin leading to FGFR1 dimerization and activation via sequential autophosphorylation on tyrosine residues which act as docking sites for interacting proteins, leading to the activation of several signaling cascades. Binds to integrin ITGAV:ITGB3. Its binding to integrin, subsequent ternary complex formation with integrin and FGFR1, and the recruitment of PTPN11 to the complex are essential for FGF1 signaling. Induces the phosphorylation and activation of FGFR1, FRS2, MAPK3/ERK1, MAPK1/ERK2 and AKT1. Can induce angiogenesis.</text>
</comment>
<comment type="subunit">
    <text evidence="3">Monomer. Homodimer. Interacts with FGFR1, FGFR2, FGFR3 and FGFR4. Affinity between fibroblast growth factors (FGFs) and their receptors is increased by heparan sulfate glycosaminoglycans that function as coreceptors. Found in a complex with FGFBP1, FGF1 and FGF2. Interacts with FGFBP1. Part of a Cu(2+)-dependent multiprotein aggregate containing FGF1, S100A13 and SYT1. Interacts with SYT1. Interacts with S100A13 (By similarity). Interacts with LRRC59 (By similarity). Interacts with CSNKA, CSNKB and FIBP (By similarity). While binding with LRRC59, CSNKA and FIBP seem mutually exclusive, CSNKB and FIBP may cooperatively interact with FGF1. Forms a ternary complex with FGFR1 and ITGAV:ITGB3 and induces the recruitment of PTPN11 to the complex (By similarity).</text>
</comment>
<comment type="subcellular location">
    <subcellularLocation>
        <location>Secreted</location>
    </subcellularLocation>
    <subcellularLocation>
        <location evidence="1">Cytoplasm</location>
    </subcellularLocation>
    <subcellularLocation>
        <location evidence="1">Cytoplasm</location>
        <location evidence="1">Cell cortex</location>
    </subcellularLocation>
    <subcellularLocation>
        <location evidence="1">Cytoplasm</location>
        <location evidence="1">Cytosol</location>
    </subcellularLocation>
    <subcellularLocation>
        <location evidence="1">Nucleus</location>
    </subcellularLocation>
    <text evidence="1">Lacks a cleavable signal sequence. Within the cytoplasm, it is transported to the cell membrane and then secreted by a non-classical pathway that requires Cu(2+) ions and S100A13. Secreted in a complex with SYT1. Binding of exogenous FGF1 to FGFR facilitates endocytosis followed by translocation of FGF1 across endosomal membrane into the cytosol. Nuclear import from the cytosol requires the classical nuclear import machinery, involving proteins KPNA1 and KPNB1, as well as LRRC59 (By similarity).</text>
</comment>
<comment type="PTM">
    <text evidence="1">In the nucleus, phosphorylated by PKC/PRKCD.</text>
</comment>
<comment type="similarity">
    <text evidence="4">Belongs to the heparin-binding growth factors family.</text>
</comment>
<protein>
    <recommendedName>
        <fullName>Fibroblast growth factor 1</fullName>
        <shortName>FGF-1</shortName>
    </recommendedName>
    <alternativeName>
        <fullName>Acidic fibroblast growth factor</fullName>
        <shortName>aFGF</shortName>
    </alternativeName>
    <alternativeName>
        <fullName>Endothelial cell growth factor</fullName>
        <shortName>ECGF</shortName>
    </alternativeName>
    <alternativeName>
        <fullName>Heparin-binding growth factor 1</fullName>
        <shortName>HBGF-1</shortName>
    </alternativeName>
</protein>
<proteinExistence type="evidence at protein level"/>
<organism>
    <name type="scientific">Sus scrofa</name>
    <name type="common">Pig</name>
    <dbReference type="NCBI Taxonomy" id="9823"/>
    <lineage>
        <taxon>Eukaryota</taxon>
        <taxon>Metazoa</taxon>
        <taxon>Chordata</taxon>
        <taxon>Craniata</taxon>
        <taxon>Vertebrata</taxon>
        <taxon>Euteleostomi</taxon>
        <taxon>Mammalia</taxon>
        <taxon>Eutheria</taxon>
        <taxon>Laurasiatheria</taxon>
        <taxon>Artiodactyla</taxon>
        <taxon>Suina</taxon>
        <taxon>Suidae</taxon>
        <taxon>Sus</taxon>
    </lineage>
</organism>
<dbReference type="EMBL" id="X60317">
    <property type="protein sequence ID" value="CAA42869.1"/>
    <property type="molecule type" value="mRNA"/>
</dbReference>
<dbReference type="PIR" id="JH0476">
    <property type="entry name" value="JH0476"/>
</dbReference>
<dbReference type="PIR" id="S03954">
    <property type="entry name" value="S03954"/>
</dbReference>
<dbReference type="BMRB" id="P20002"/>
<dbReference type="SMR" id="P20002"/>
<dbReference type="FunCoup" id="P20002">
    <property type="interactions" value="135"/>
</dbReference>
<dbReference type="STRING" id="9823.ENSSSCP00000037435"/>
<dbReference type="PaxDb" id="9823-ENSSSCP00000019575"/>
<dbReference type="PeptideAtlas" id="P20002"/>
<dbReference type="eggNOG" id="KOG3885">
    <property type="taxonomic scope" value="Eukaryota"/>
</dbReference>
<dbReference type="HOGENOM" id="CLU_081609_5_1_1"/>
<dbReference type="InParanoid" id="P20002"/>
<dbReference type="Proteomes" id="UP000008227">
    <property type="component" value="Unplaced"/>
</dbReference>
<dbReference type="Proteomes" id="UP000314985">
    <property type="component" value="Unplaced"/>
</dbReference>
<dbReference type="Proteomes" id="UP000694570">
    <property type="component" value="Unplaced"/>
</dbReference>
<dbReference type="Proteomes" id="UP000694571">
    <property type="component" value="Unplaced"/>
</dbReference>
<dbReference type="Proteomes" id="UP000694720">
    <property type="component" value="Unplaced"/>
</dbReference>
<dbReference type="Proteomes" id="UP000694722">
    <property type="component" value="Unplaced"/>
</dbReference>
<dbReference type="Proteomes" id="UP000694723">
    <property type="component" value="Unplaced"/>
</dbReference>
<dbReference type="Proteomes" id="UP000694724">
    <property type="component" value="Unplaced"/>
</dbReference>
<dbReference type="Proteomes" id="UP000694725">
    <property type="component" value="Unplaced"/>
</dbReference>
<dbReference type="Proteomes" id="UP000694726">
    <property type="component" value="Unplaced"/>
</dbReference>
<dbReference type="Proteomes" id="UP000694727">
    <property type="component" value="Unplaced"/>
</dbReference>
<dbReference type="Proteomes" id="UP000694728">
    <property type="component" value="Unplaced"/>
</dbReference>
<dbReference type="GO" id="GO:0005938">
    <property type="term" value="C:cell cortex"/>
    <property type="evidence" value="ECO:0007669"/>
    <property type="project" value="UniProtKB-SubCell"/>
</dbReference>
<dbReference type="GO" id="GO:0005737">
    <property type="term" value="C:cytoplasm"/>
    <property type="evidence" value="ECO:0000318"/>
    <property type="project" value="GO_Central"/>
</dbReference>
<dbReference type="GO" id="GO:0005829">
    <property type="term" value="C:cytosol"/>
    <property type="evidence" value="ECO:0000250"/>
    <property type="project" value="UniProtKB"/>
</dbReference>
<dbReference type="GO" id="GO:0005576">
    <property type="term" value="C:extracellular region"/>
    <property type="evidence" value="ECO:0000250"/>
    <property type="project" value="UniProtKB"/>
</dbReference>
<dbReference type="GO" id="GO:0005615">
    <property type="term" value="C:extracellular space"/>
    <property type="evidence" value="ECO:0000250"/>
    <property type="project" value="UniProtKB"/>
</dbReference>
<dbReference type="GO" id="GO:0005634">
    <property type="term" value="C:nucleus"/>
    <property type="evidence" value="ECO:0000318"/>
    <property type="project" value="GO_Central"/>
</dbReference>
<dbReference type="GO" id="GO:0005104">
    <property type="term" value="F:fibroblast growth factor receptor binding"/>
    <property type="evidence" value="ECO:0000250"/>
    <property type="project" value="UniProtKB"/>
</dbReference>
<dbReference type="GO" id="GO:0008083">
    <property type="term" value="F:growth factor activity"/>
    <property type="evidence" value="ECO:0000250"/>
    <property type="project" value="UniProtKB"/>
</dbReference>
<dbReference type="GO" id="GO:0008201">
    <property type="term" value="F:heparin binding"/>
    <property type="evidence" value="ECO:0000250"/>
    <property type="project" value="UniProtKB"/>
</dbReference>
<dbReference type="GO" id="GO:0005178">
    <property type="term" value="F:integrin binding"/>
    <property type="evidence" value="ECO:0000250"/>
    <property type="project" value="UniProtKB"/>
</dbReference>
<dbReference type="GO" id="GO:0044548">
    <property type="term" value="F:S100 protein binding"/>
    <property type="evidence" value="ECO:0000250"/>
    <property type="project" value="UniProtKB"/>
</dbReference>
<dbReference type="GO" id="GO:0032148">
    <property type="term" value="P:activation of protein kinase B activity"/>
    <property type="evidence" value="ECO:0000250"/>
    <property type="project" value="UniProtKB"/>
</dbReference>
<dbReference type="GO" id="GO:0001525">
    <property type="term" value="P:angiogenesis"/>
    <property type="evidence" value="ECO:0007669"/>
    <property type="project" value="UniProtKB-KW"/>
</dbReference>
<dbReference type="GO" id="GO:0060681">
    <property type="term" value="P:branch elongation involved in ureteric bud branching"/>
    <property type="evidence" value="ECO:0000250"/>
    <property type="project" value="UniProtKB"/>
</dbReference>
<dbReference type="GO" id="GO:0034605">
    <property type="term" value="P:cellular response to heat"/>
    <property type="evidence" value="ECO:0000250"/>
    <property type="project" value="UniProtKB"/>
</dbReference>
<dbReference type="GO" id="GO:0008543">
    <property type="term" value="P:fibroblast growth factor receptor signaling pathway"/>
    <property type="evidence" value="ECO:0000250"/>
    <property type="project" value="UniProtKB"/>
</dbReference>
<dbReference type="GO" id="GO:0072163">
    <property type="term" value="P:mesonephric epithelium development"/>
    <property type="evidence" value="ECO:0000250"/>
    <property type="project" value="UniProtKB"/>
</dbReference>
<dbReference type="GO" id="GO:0022008">
    <property type="term" value="P:neurogenesis"/>
    <property type="evidence" value="ECO:0000318"/>
    <property type="project" value="GO_Central"/>
</dbReference>
<dbReference type="GO" id="GO:0045766">
    <property type="term" value="P:positive regulation of angiogenesis"/>
    <property type="evidence" value="ECO:0000250"/>
    <property type="project" value="UniProtKB"/>
</dbReference>
<dbReference type="GO" id="GO:0051781">
    <property type="term" value="P:positive regulation of cell division"/>
    <property type="evidence" value="ECO:0000250"/>
    <property type="project" value="UniProtKB"/>
</dbReference>
<dbReference type="GO" id="GO:0030335">
    <property type="term" value="P:positive regulation of cell migration"/>
    <property type="evidence" value="ECO:0000250"/>
    <property type="project" value="UniProtKB"/>
</dbReference>
<dbReference type="GO" id="GO:0008284">
    <property type="term" value="P:positive regulation of cell population proliferation"/>
    <property type="evidence" value="ECO:0000250"/>
    <property type="project" value="UniProtKB"/>
</dbReference>
<dbReference type="GO" id="GO:0045542">
    <property type="term" value="P:positive regulation of cholesterol biosynthetic process"/>
    <property type="evidence" value="ECO:0000250"/>
    <property type="project" value="UniProtKB"/>
</dbReference>
<dbReference type="GO" id="GO:0010595">
    <property type="term" value="P:positive regulation of endothelial cell migration"/>
    <property type="evidence" value="ECO:0000250"/>
    <property type="project" value="UniProtKB"/>
</dbReference>
<dbReference type="GO" id="GO:0070374">
    <property type="term" value="P:positive regulation of ERK1 and ERK2 cascade"/>
    <property type="evidence" value="ECO:0000250"/>
    <property type="project" value="UniProtKB"/>
</dbReference>
<dbReference type="GO" id="GO:1902533">
    <property type="term" value="P:positive regulation of intracellular signal transduction"/>
    <property type="evidence" value="ECO:0000250"/>
    <property type="project" value="UniProtKB"/>
</dbReference>
<dbReference type="GO" id="GO:0043410">
    <property type="term" value="P:positive regulation of MAPK cascade"/>
    <property type="evidence" value="ECO:0000318"/>
    <property type="project" value="GO_Central"/>
</dbReference>
<dbReference type="GO" id="GO:1903672">
    <property type="term" value="P:positive regulation of sprouting angiogenesis"/>
    <property type="evidence" value="ECO:0000250"/>
    <property type="project" value="UniProtKB"/>
</dbReference>
<dbReference type="GO" id="GO:0045944">
    <property type="term" value="P:positive regulation of transcription by RNA polymerase II"/>
    <property type="evidence" value="ECO:0000250"/>
    <property type="project" value="UniProtKB"/>
</dbReference>
<dbReference type="GO" id="GO:0030334">
    <property type="term" value="P:regulation of cell migration"/>
    <property type="evidence" value="ECO:0000318"/>
    <property type="project" value="GO_Central"/>
</dbReference>
<dbReference type="GO" id="GO:1901509">
    <property type="term" value="P:regulation of endothelial tube morphogenesis"/>
    <property type="evidence" value="ECO:0000250"/>
    <property type="project" value="UniProtKB"/>
</dbReference>
<dbReference type="CDD" id="cd23313">
    <property type="entry name" value="beta-trefoil_FGF1"/>
    <property type="match status" value="1"/>
</dbReference>
<dbReference type="FunFam" id="2.80.10.50:FF:000020">
    <property type="entry name" value="Fibroblast growth factor 1"/>
    <property type="match status" value="1"/>
</dbReference>
<dbReference type="Gene3D" id="2.80.10.50">
    <property type="match status" value="1"/>
</dbReference>
<dbReference type="InterPro" id="IPR002209">
    <property type="entry name" value="Fibroblast_GF_fam"/>
</dbReference>
<dbReference type="InterPro" id="IPR008996">
    <property type="entry name" value="IL1/FGF"/>
</dbReference>
<dbReference type="PANTHER" id="PTHR11486">
    <property type="entry name" value="FIBROBLAST GROWTH FACTOR"/>
    <property type="match status" value="1"/>
</dbReference>
<dbReference type="Pfam" id="PF00167">
    <property type="entry name" value="FGF"/>
    <property type="match status" value="1"/>
</dbReference>
<dbReference type="PRINTS" id="PR00263">
    <property type="entry name" value="HBGFFGF"/>
</dbReference>
<dbReference type="PRINTS" id="PR00262">
    <property type="entry name" value="IL1HBGF"/>
</dbReference>
<dbReference type="SMART" id="SM00442">
    <property type="entry name" value="FGF"/>
    <property type="match status" value="1"/>
</dbReference>
<dbReference type="SUPFAM" id="SSF50353">
    <property type="entry name" value="Cytokine"/>
    <property type="match status" value="1"/>
</dbReference>
<dbReference type="PROSITE" id="PS00247">
    <property type="entry name" value="HBGF_FGF"/>
    <property type="match status" value="1"/>
</dbReference>
<name>FGF1_PIG</name>